<sequence length="405" mass="47040">MDINKPGWNQSDQQATAYDPNQQQYYGDGSTYYDPDQAVDPNQAYYPDPNTYPDAAAYYGYGQDGQAYPQDYAQDPNQAYYADPNAYQDPNAYTDPNAYVDPNAYQDPNAYVDPNNYTDPNAYYGYGQDGQAYPQDYAQDPNQAYYADPNAYQDPNAYTDPYYVTSTDPNAYYGQVDNVPALEASDLAYEVTPQEQAAEQELFSEPETKVIREIHEFPFEKIRSYFQTDFDSYNSRLTQLKDKLDNAIFSMRKAIDTVKENSANLQIMKQNFERQLKEQQTQRLTSNTDAEKIGAKINQLEERMQRLSRTMESVEWTKKEPRQEQFDPRFVDPRNFNNYVNNTDTMMSMFEKVLMMNLLRSTTPVQPPVQYFTPQPLTASPRPVYEEPISASFRRRGYRGDEFYE</sequence>
<protein>
    <recommendedName>
        <fullName>Proline-rich P65 protein</fullName>
    </recommendedName>
</protein>
<organism>
    <name type="scientific">Mycoplasma pneumoniae (strain ATCC 29342 / M129 / Subtype 1)</name>
    <name type="common">Mycoplasmoides pneumoniae</name>
    <dbReference type="NCBI Taxonomy" id="272634"/>
    <lineage>
        <taxon>Bacteria</taxon>
        <taxon>Bacillati</taxon>
        <taxon>Mycoplasmatota</taxon>
        <taxon>Mycoplasmoidales</taxon>
        <taxon>Mycoplasmoidaceae</taxon>
        <taxon>Mycoplasmoides</taxon>
    </lineage>
</organism>
<accession>P0CJ81</accession>
<accession>P53663</accession>
<accession>P53664</accession>
<accession>Q6LAC2</accession>
<accession>Q6LAC3</accession>
<proteinExistence type="predicted"/>
<keyword id="KW-1003">Cell membrane</keyword>
<keyword id="KW-0472">Membrane</keyword>
<keyword id="KW-1185">Reference proteome</keyword>
<keyword id="KW-0677">Repeat</keyword>
<name>P65_MYCPN</name>
<reference key="1">
    <citation type="journal article" date="1995" name="J. Bacteriol.">
        <title>The proline-rich P65 protein of Mycoplasma pneumoniae is a component of the Triton X-100-insoluble fraction and exhibits size polymorphism in the strains M129 and FH.</title>
        <authorList>
            <person name="Proft T."/>
            <person name="Hilbert H."/>
            <person name="Layh-Schmitt G."/>
            <person name="Herrmann R."/>
        </authorList>
    </citation>
    <scope>NUCLEOTIDE SEQUENCE [GENOMIC DNA]</scope>
    <scope>SUBCELLULAR LOCATION</scope>
    <source>
        <strain>ATCC 29342 / M129 / Subtype 1</strain>
    </source>
</reference>
<reference key="2">
    <citation type="journal article" date="1997" name="J. Bacteriol.">
        <title>Transposon mutagenesis reinforces the correlation between Mycoplasma pneumoniae cytoskeletal protein HMW2 and cytadherence.</title>
        <authorList>
            <person name="Krause D.C."/>
            <person name="Proft T."/>
            <person name="Hedreyda C.T."/>
            <person name="Hilbert H."/>
            <person name="Plagens H."/>
            <person name="Herrmann R."/>
        </authorList>
    </citation>
    <scope>NUCLEOTIDE SEQUENCE [GENOMIC DNA]</scope>
    <source>
        <strain>ATCC 29342 / M129 / Subtype 1</strain>
    </source>
</reference>
<reference key="3">
    <citation type="journal article" date="1996" name="Nucleic Acids Res.">
        <title>Complete sequence analysis of the genome of the bacterium Mycoplasma pneumoniae.</title>
        <authorList>
            <person name="Himmelreich R."/>
            <person name="Hilbert H."/>
            <person name="Plagens H."/>
            <person name="Pirkl E."/>
            <person name="Li B.-C."/>
            <person name="Herrmann R."/>
        </authorList>
    </citation>
    <scope>NUCLEOTIDE SEQUENCE [LARGE SCALE GENOMIC DNA]</scope>
    <source>
        <strain>ATCC 29342 / M129 / Subtype 1</strain>
    </source>
</reference>
<reference key="4">
    <citation type="journal article" date="1994" name="Mol. Microbiol.">
        <title>Identification and characterization of hitherto unknown Mycoplasma pneumoniae proteins.</title>
        <authorList>
            <person name="Proft T."/>
            <person name="Herrmann R."/>
        </authorList>
    </citation>
    <scope>NUCLEOTIDE SEQUENCE [GENOMIC DNA] OF 40-75 AND 83-95</scope>
    <scope>SUBCELLULAR LOCATION</scope>
    <source>
        <strain>ATCC 29342 / M129 / Subtype 1</strain>
    </source>
</reference>
<dbReference type="EMBL" id="Z34977">
    <property type="protein sequence ID" value="CAA84429.1"/>
    <property type="molecule type" value="Genomic_DNA"/>
</dbReference>
<dbReference type="EMBL" id="U59896">
    <property type="protein sequence ID" value="AAB52526.1"/>
    <property type="molecule type" value="Genomic_DNA"/>
</dbReference>
<dbReference type="EMBL" id="U00089">
    <property type="protein sequence ID" value="AAB96175.1"/>
    <property type="molecule type" value="Genomic_DNA"/>
</dbReference>
<dbReference type="EMBL" id="Z32653">
    <property type="protein sequence ID" value="CAA83574.1"/>
    <property type="molecule type" value="Genomic_DNA"/>
</dbReference>
<dbReference type="EMBL" id="Z32655">
    <property type="protein sequence ID" value="CAA83576.1"/>
    <property type="molecule type" value="Genomic_DNA"/>
</dbReference>
<dbReference type="PIR" id="S73853">
    <property type="entry name" value="S73853"/>
</dbReference>
<dbReference type="RefSeq" id="NP_109997.1">
    <property type="nucleotide sequence ID" value="NC_000912.1"/>
</dbReference>
<dbReference type="RefSeq" id="WP_010874665.1">
    <property type="nucleotide sequence ID" value="NZ_OU342337.1"/>
</dbReference>
<dbReference type="IntAct" id="P0CJ81">
    <property type="interactions" value="1"/>
</dbReference>
<dbReference type="STRING" id="272634.MPN_309"/>
<dbReference type="EnsemblBacteria" id="AAB96175">
    <property type="protein sequence ID" value="AAB96175"/>
    <property type="gene ID" value="MPN_309"/>
</dbReference>
<dbReference type="KEGG" id="mpn:MPN_309"/>
<dbReference type="PATRIC" id="fig|272634.6.peg.333"/>
<dbReference type="HOGENOM" id="CLU_741505_0_0_14"/>
<dbReference type="OrthoDB" id="10009228at2"/>
<dbReference type="BioCyc" id="MPNE272634:G1GJ3-491-MONOMER"/>
<dbReference type="Proteomes" id="UP000000808">
    <property type="component" value="Chromosome"/>
</dbReference>
<dbReference type="GO" id="GO:0005886">
    <property type="term" value="C:plasma membrane"/>
    <property type="evidence" value="ECO:0007669"/>
    <property type="project" value="UniProtKB-SubCell"/>
</dbReference>
<comment type="subcellular location">
    <subcellularLocation>
        <location evidence="2 3">Cell membrane</location>
        <topology evidence="2 3">Peripheral membrane protein</topology>
    </subcellularLocation>
    <text>Probably with epitopes exposed at the cell surface.</text>
</comment>
<comment type="domain">
    <text>The penta/hexapeptides repeats form a proline-rich acidic domain. In addition, a part of this region contains a perfect direct repeat.</text>
</comment>
<comment type="PTM">
    <text evidence="4">The N-terminus is blocked.</text>
</comment>
<comment type="caution">
    <text evidence="5">The protein sequence for 83-95 might be that for residues 148-160; the 2 sequences are identical.</text>
</comment>
<feature type="chain" id="PRO_0000058145" description="Proline-rich P65 protein">
    <location>
        <begin position="1"/>
        <end position="405"/>
    </location>
</feature>
<feature type="repeat" description="1">
    <location>
        <begin position="40"/>
        <end position="45"/>
    </location>
</feature>
<feature type="repeat" description="2">
    <location>
        <begin position="75"/>
        <end position="80"/>
    </location>
</feature>
<feature type="repeat" description="3">
    <location>
        <begin position="83"/>
        <end position="87"/>
    </location>
</feature>
<feature type="repeat" description="4">
    <location>
        <begin position="89"/>
        <end position="93"/>
    </location>
</feature>
<feature type="repeat" description="5">
    <location>
        <begin position="95"/>
        <end position="99"/>
    </location>
</feature>
<feature type="repeat" description="6">
    <location>
        <begin position="101"/>
        <end position="105"/>
    </location>
</feature>
<feature type="repeat" description="7">
    <location>
        <begin position="107"/>
        <end position="111"/>
    </location>
</feature>
<feature type="repeat" description="8">
    <location>
        <begin position="119"/>
        <end position="123"/>
    </location>
</feature>
<feature type="repeat" description="9">
    <location>
        <begin position="140"/>
        <end position="145"/>
    </location>
</feature>
<feature type="repeat" description="10">
    <location>
        <begin position="148"/>
        <end position="152"/>
    </location>
</feature>
<feature type="repeat" description="11">
    <location>
        <begin position="154"/>
        <end position="158"/>
    </location>
</feature>
<feature type="repeat" description="12">
    <location>
        <begin position="168"/>
        <end position="172"/>
    </location>
</feature>
<feature type="region of interest" description="Disordered" evidence="1">
    <location>
        <begin position="1"/>
        <end position="58"/>
    </location>
</feature>
<feature type="region of interest" description="12 X 5 AA repeats of D-P-N-Q-A-Y">
    <location>
        <begin position="40"/>
        <end position="172"/>
    </location>
</feature>
<feature type="compositionally biased region" description="Polar residues" evidence="1">
    <location>
        <begin position="7"/>
        <end position="25"/>
    </location>
</feature>
<gene>
    <name type="primary">p65</name>
    <name type="ordered locus">MPN_309</name>
    <name type="ORF">MP527</name>
</gene>
<evidence type="ECO:0000256" key="1">
    <source>
        <dbReference type="SAM" id="MobiDB-lite"/>
    </source>
</evidence>
<evidence type="ECO:0000269" key="2">
    <source>
    </source>
</evidence>
<evidence type="ECO:0000269" key="3">
    <source>
    </source>
</evidence>
<evidence type="ECO:0000305" key="4"/>
<evidence type="ECO:0000305" key="5">
    <source>
    </source>
</evidence>